<evidence type="ECO:0000255" key="1">
    <source>
        <dbReference type="HAMAP-Rule" id="MF_01665"/>
    </source>
</evidence>
<dbReference type="EC" id="1.17.99.9" evidence="1"/>
<dbReference type="EMBL" id="BX572601">
    <property type="protein sequence ID" value="CAE28200.1"/>
    <property type="molecule type" value="Genomic_DNA"/>
</dbReference>
<dbReference type="RefSeq" id="WP_011158309.1">
    <property type="nucleotide sequence ID" value="NZ_CP116810.1"/>
</dbReference>
<dbReference type="SMR" id="Q6N660"/>
<dbReference type="STRING" id="258594.RPA2758"/>
<dbReference type="GeneID" id="66893835"/>
<dbReference type="eggNOG" id="COG1612">
    <property type="taxonomic scope" value="Bacteria"/>
</dbReference>
<dbReference type="HOGENOM" id="CLU_017627_0_0_5"/>
<dbReference type="PhylomeDB" id="Q6N660"/>
<dbReference type="UniPathway" id="UPA00269">
    <property type="reaction ID" value="UER00713"/>
</dbReference>
<dbReference type="GO" id="GO:0005886">
    <property type="term" value="C:plasma membrane"/>
    <property type="evidence" value="ECO:0007669"/>
    <property type="project" value="UniProtKB-SubCell"/>
</dbReference>
<dbReference type="GO" id="GO:0046872">
    <property type="term" value="F:metal ion binding"/>
    <property type="evidence" value="ECO:0007669"/>
    <property type="project" value="UniProtKB-KW"/>
</dbReference>
<dbReference type="GO" id="GO:0016653">
    <property type="term" value="F:oxidoreductase activity, acting on NAD(P)H, heme protein as acceptor"/>
    <property type="evidence" value="ECO:0007669"/>
    <property type="project" value="InterPro"/>
</dbReference>
<dbReference type="GO" id="GO:0006784">
    <property type="term" value="P:heme A biosynthetic process"/>
    <property type="evidence" value="ECO:0007669"/>
    <property type="project" value="UniProtKB-UniRule"/>
</dbReference>
<dbReference type="HAMAP" id="MF_01665">
    <property type="entry name" value="HemeA_synth_type2"/>
    <property type="match status" value="1"/>
</dbReference>
<dbReference type="InterPro" id="IPR003780">
    <property type="entry name" value="COX15/CtaA_fam"/>
</dbReference>
<dbReference type="InterPro" id="IPR023754">
    <property type="entry name" value="HemeA_Synthase_type2"/>
</dbReference>
<dbReference type="PANTHER" id="PTHR23289">
    <property type="entry name" value="CYTOCHROME C OXIDASE ASSEMBLY PROTEIN COX15"/>
    <property type="match status" value="1"/>
</dbReference>
<dbReference type="PANTHER" id="PTHR23289:SF2">
    <property type="entry name" value="CYTOCHROME C OXIDASE ASSEMBLY PROTEIN COX15 HOMOLOG"/>
    <property type="match status" value="1"/>
</dbReference>
<dbReference type="Pfam" id="PF02628">
    <property type="entry name" value="COX15-CtaA"/>
    <property type="match status" value="1"/>
</dbReference>
<organism>
    <name type="scientific">Rhodopseudomonas palustris (strain ATCC BAA-98 / CGA009)</name>
    <dbReference type="NCBI Taxonomy" id="258594"/>
    <lineage>
        <taxon>Bacteria</taxon>
        <taxon>Pseudomonadati</taxon>
        <taxon>Pseudomonadota</taxon>
        <taxon>Alphaproteobacteria</taxon>
        <taxon>Hyphomicrobiales</taxon>
        <taxon>Nitrobacteraceae</taxon>
        <taxon>Rhodopseudomonas</taxon>
    </lineage>
</organism>
<name>CTAA_RHOPA</name>
<feature type="chain" id="PRO_0000349066" description="Heme A synthase">
    <location>
        <begin position="1"/>
        <end position="368"/>
    </location>
</feature>
<feature type="transmembrane region" description="Helical" evidence="1">
    <location>
        <begin position="14"/>
        <end position="34"/>
    </location>
</feature>
<feature type="transmembrane region" description="Helical" evidence="1">
    <location>
        <begin position="104"/>
        <end position="124"/>
    </location>
</feature>
<feature type="transmembrane region" description="Helical" evidence="1">
    <location>
        <begin position="129"/>
        <end position="149"/>
    </location>
</feature>
<feature type="transmembrane region" description="Helical" evidence="1">
    <location>
        <begin position="161"/>
        <end position="181"/>
    </location>
</feature>
<feature type="transmembrane region" description="Helical" evidence="1">
    <location>
        <begin position="200"/>
        <end position="220"/>
    </location>
</feature>
<feature type="transmembrane region" description="Helical" evidence="1">
    <location>
        <begin position="266"/>
        <end position="283"/>
    </location>
</feature>
<feature type="transmembrane region" description="Helical" evidence="1">
    <location>
        <begin position="296"/>
        <end position="316"/>
    </location>
</feature>
<feature type="transmembrane region" description="Helical" evidence="1">
    <location>
        <begin position="318"/>
        <end position="338"/>
    </location>
</feature>
<feature type="binding site" description="axial binding residue" evidence="1">
    <location>
        <position position="264"/>
    </location>
    <ligand>
        <name>heme</name>
        <dbReference type="ChEBI" id="CHEBI:30413"/>
    </ligand>
    <ligandPart>
        <name>Fe</name>
        <dbReference type="ChEBI" id="CHEBI:18248"/>
    </ligandPart>
</feature>
<feature type="binding site" description="axial binding residue" evidence="1">
    <location>
        <position position="322"/>
    </location>
    <ligand>
        <name>heme</name>
        <dbReference type="ChEBI" id="CHEBI:30413"/>
    </ligand>
    <ligandPart>
        <name>Fe</name>
        <dbReference type="ChEBI" id="CHEBI:18248"/>
    </ligandPart>
</feature>
<gene>
    <name evidence="1" type="primary">ctaA</name>
    <name type="ordered locus">RPA2758</name>
</gene>
<keyword id="KW-1003">Cell membrane</keyword>
<keyword id="KW-0350">Heme biosynthesis</keyword>
<keyword id="KW-0408">Iron</keyword>
<keyword id="KW-0472">Membrane</keyword>
<keyword id="KW-0479">Metal-binding</keyword>
<keyword id="KW-0560">Oxidoreductase</keyword>
<keyword id="KW-0812">Transmembrane</keyword>
<keyword id="KW-1133">Transmembrane helix</keyword>
<comment type="function">
    <text evidence="1">Catalyzes the conversion of heme O to heme A by two successive hydroxylations of the methyl group at C8. The first hydroxylation forms heme I, the second hydroxylation results in an unstable dihydroxymethyl group, which spontaneously dehydrates, resulting in the formyl group of heme A.</text>
</comment>
<comment type="catalytic activity">
    <reaction evidence="1">
        <text>Fe(II)-heme o + 2 A + H2O = Fe(II)-heme a + 2 AH2</text>
        <dbReference type="Rhea" id="RHEA:63388"/>
        <dbReference type="ChEBI" id="CHEBI:13193"/>
        <dbReference type="ChEBI" id="CHEBI:15377"/>
        <dbReference type="ChEBI" id="CHEBI:17499"/>
        <dbReference type="ChEBI" id="CHEBI:60530"/>
        <dbReference type="ChEBI" id="CHEBI:61715"/>
        <dbReference type="EC" id="1.17.99.9"/>
    </reaction>
    <physiologicalReaction direction="left-to-right" evidence="1">
        <dbReference type="Rhea" id="RHEA:63389"/>
    </physiologicalReaction>
</comment>
<comment type="cofactor">
    <cofactor evidence="1">
        <name>heme b</name>
        <dbReference type="ChEBI" id="CHEBI:60344"/>
    </cofactor>
</comment>
<comment type="pathway">
    <text evidence="1">Porphyrin-containing compound metabolism; heme A biosynthesis; heme A from heme O: step 1/1.</text>
</comment>
<comment type="subunit">
    <text evidence="1">Interacts with CtaB.</text>
</comment>
<comment type="subcellular location">
    <subcellularLocation>
        <location evidence="1">Cell membrane</location>
        <topology evidence="1">Multi-pass membrane protein</topology>
    </subcellularLocation>
</comment>
<comment type="similarity">
    <text evidence="1">Belongs to the COX15/CtaA family. Type 2 subfamily.</text>
</comment>
<protein>
    <recommendedName>
        <fullName evidence="1">Heme A synthase</fullName>
        <shortName evidence="1">HAS</shortName>
        <ecNumber evidence="1">1.17.99.9</ecNumber>
    </recommendedName>
    <alternativeName>
        <fullName evidence="1">Cytochrome aa3-controlling protein</fullName>
    </alternativeName>
</protein>
<reference key="1">
    <citation type="journal article" date="2004" name="Nat. Biotechnol.">
        <title>Complete genome sequence of the metabolically versatile photosynthetic bacterium Rhodopseudomonas palustris.</title>
        <authorList>
            <person name="Larimer F.W."/>
            <person name="Chain P."/>
            <person name="Hauser L."/>
            <person name="Lamerdin J.E."/>
            <person name="Malfatti S."/>
            <person name="Do L."/>
            <person name="Land M.L."/>
            <person name="Pelletier D.A."/>
            <person name="Beatty J.T."/>
            <person name="Lang A.S."/>
            <person name="Tabita F.R."/>
            <person name="Gibson J.L."/>
            <person name="Hanson T.E."/>
            <person name="Bobst C."/>
            <person name="Torres y Torres J.L."/>
            <person name="Peres C."/>
            <person name="Harrison F.H."/>
            <person name="Gibson J."/>
            <person name="Harwood C.S."/>
        </authorList>
    </citation>
    <scope>NUCLEOTIDE SEQUENCE [LARGE SCALE GENOMIC DNA]</scope>
    <source>
        <strain>ATCC BAA-98 / CGA009</strain>
    </source>
</reference>
<sequence>MTIAAAPPSSRFRAVRIWLTLVAALIAVMVLVGGATRLTESGLSIVEWKPVTGSLPPLTDTQWHAAFDGYKQIPQYRELNAGMTLDQFKTIFWWEWSHRLLGRVIGIVYLLPFLWFLWRGAIGPEWKRALWIIFALGALQGAVGWWMVASGLSQRTEVSQVRLATHLSLALIIYAAIVWTLRRMADGARVAAPVRLRVTALALLGLTFVQLYAGALVAGLRAGRLYNTWPEIDGALIPDAARLWFESPWWKNLFDNHLTVQFDHRMLAYALWTLAALHMIDALRTRAAARGAVQLFLALTAQATLGIFTVLYAAPIDLALVHQAMALVVLTLAVLQAERLTATRKDRTARDRGAAGRLAIPSEPFPSA</sequence>
<accession>Q6N660</accession>
<proteinExistence type="inferred from homology"/>